<sequence>MNKNNVIDSLFNIIEDRKDKPIEGSYTGYLFEKGLDKILKKVGEESSEVIIAAKNEDEEELIKEICDLTYHIMVLMVEKQIKLDGIEKELEKRREKICNKKNERKTIEKL</sequence>
<keyword id="KW-0028">Amino-acid biosynthesis</keyword>
<keyword id="KW-0067">ATP-binding</keyword>
<keyword id="KW-0963">Cytoplasm</keyword>
<keyword id="KW-0368">Histidine biosynthesis</keyword>
<keyword id="KW-0378">Hydrolase</keyword>
<keyword id="KW-0547">Nucleotide-binding</keyword>
<proteinExistence type="inferred from homology"/>
<comment type="catalytic activity">
    <reaction evidence="1">
        <text>1-(5-phospho-beta-D-ribosyl)-ATP + H2O = 1-(5-phospho-beta-D-ribosyl)-5'-AMP + diphosphate + H(+)</text>
        <dbReference type="Rhea" id="RHEA:22828"/>
        <dbReference type="ChEBI" id="CHEBI:15377"/>
        <dbReference type="ChEBI" id="CHEBI:15378"/>
        <dbReference type="ChEBI" id="CHEBI:33019"/>
        <dbReference type="ChEBI" id="CHEBI:59457"/>
        <dbReference type="ChEBI" id="CHEBI:73183"/>
        <dbReference type="EC" id="3.6.1.31"/>
    </reaction>
</comment>
<comment type="pathway">
    <text evidence="1">Amino-acid biosynthesis; L-histidine biosynthesis; L-histidine from 5-phospho-alpha-D-ribose 1-diphosphate: step 2/9.</text>
</comment>
<comment type="subcellular location">
    <subcellularLocation>
        <location evidence="1">Cytoplasm</location>
    </subcellularLocation>
</comment>
<comment type="similarity">
    <text evidence="1">Belongs to the PRA-PH family.</text>
</comment>
<gene>
    <name evidence="1" type="primary">hisE</name>
    <name type="ordered locus">CLM_1815</name>
</gene>
<feature type="chain" id="PRO_1000149051" description="Phosphoribosyl-ATP pyrophosphatase">
    <location>
        <begin position="1"/>
        <end position="110"/>
    </location>
</feature>
<evidence type="ECO:0000255" key="1">
    <source>
        <dbReference type="HAMAP-Rule" id="MF_01020"/>
    </source>
</evidence>
<protein>
    <recommendedName>
        <fullName evidence="1">Phosphoribosyl-ATP pyrophosphatase</fullName>
        <shortName evidence="1">PRA-PH</shortName>
        <ecNumber evidence="1">3.6.1.31</ecNumber>
    </recommendedName>
</protein>
<organism>
    <name type="scientific">Clostridium botulinum (strain Kyoto / Type A2)</name>
    <dbReference type="NCBI Taxonomy" id="536232"/>
    <lineage>
        <taxon>Bacteria</taxon>
        <taxon>Bacillati</taxon>
        <taxon>Bacillota</taxon>
        <taxon>Clostridia</taxon>
        <taxon>Eubacteriales</taxon>
        <taxon>Clostridiaceae</taxon>
        <taxon>Clostridium</taxon>
    </lineage>
</organism>
<dbReference type="EC" id="3.6.1.31" evidence="1"/>
<dbReference type="EMBL" id="CP001581">
    <property type="protein sequence ID" value="ACO85120.1"/>
    <property type="molecule type" value="Genomic_DNA"/>
</dbReference>
<dbReference type="RefSeq" id="WP_003391015.1">
    <property type="nucleotide sequence ID" value="NC_012563.1"/>
</dbReference>
<dbReference type="SMR" id="C1FN44"/>
<dbReference type="KEGG" id="cby:CLM_1815"/>
<dbReference type="eggNOG" id="COG0140">
    <property type="taxonomic scope" value="Bacteria"/>
</dbReference>
<dbReference type="HOGENOM" id="CLU_123337_0_0_9"/>
<dbReference type="UniPathway" id="UPA00031">
    <property type="reaction ID" value="UER00007"/>
</dbReference>
<dbReference type="Proteomes" id="UP000001374">
    <property type="component" value="Chromosome"/>
</dbReference>
<dbReference type="GO" id="GO:0005737">
    <property type="term" value="C:cytoplasm"/>
    <property type="evidence" value="ECO:0007669"/>
    <property type="project" value="UniProtKB-SubCell"/>
</dbReference>
<dbReference type="GO" id="GO:0005524">
    <property type="term" value="F:ATP binding"/>
    <property type="evidence" value="ECO:0007669"/>
    <property type="project" value="UniProtKB-KW"/>
</dbReference>
<dbReference type="GO" id="GO:0004636">
    <property type="term" value="F:phosphoribosyl-ATP diphosphatase activity"/>
    <property type="evidence" value="ECO:0007669"/>
    <property type="project" value="UniProtKB-UniRule"/>
</dbReference>
<dbReference type="GO" id="GO:0000105">
    <property type="term" value="P:L-histidine biosynthetic process"/>
    <property type="evidence" value="ECO:0007669"/>
    <property type="project" value="UniProtKB-UniRule"/>
</dbReference>
<dbReference type="CDD" id="cd11534">
    <property type="entry name" value="NTP-PPase_HisIE_like"/>
    <property type="match status" value="1"/>
</dbReference>
<dbReference type="Gene3D" id="1.10.287.1080">
    <property type="entry name" value="MazG-like"/>
    <property type="match status" value="1"/>
</dbReference>
<dbReference type="HAMAP" id="MF_01020">
    <property type="entry name" value="HisE"/>
    <property type="match status" value="1"/>
</dbReference>
<dbReference type="InterPro" id="IPR008179">
    <property type="entry name" value="HisE"/>
</dbReference>
<dbReference type="InterPro" id="IPR021130">
    <property type="entry name" value="PRib-ATP_PPHydrolase-like"/>
</dbReference>
<dbReference type="NCBIfam" id="TIGR03188">
    <property type="entry name" value="histidine_hisI"/>
    <property type="match status" value="1"/>
</dbReference>
<dbReference type="PANTHER" id="PTHR42945">
    <property type="entry name" value="HISTIDINE BIOSYNTHESIS BIFUNCTIONAL PROTEIN"/>
    <property type="match status" value="1"/>
</dbReference>
<dbReference type="PANTHER" id="PTHR42945:SF9">
    <property type="entry name" value="HISTIDINE BIOSYNTHESIS BIFUNCTIONAL PROTEIN HISIE"/>
    <property type="match status" value="1"/>
</dbReference>
<dbReference type="Pfam" id="PF01503">
    <property type="entry name" value="PRA-PH"/>
    <property type="match status" value="1"/>
</dbReference>
<dbReference type="SUPFAM" id="SSF101386">
    <property type="entry name" value="all-alpha NTP pyrophosphatases"/>
    <property type="match status" value="1"/>
</dbReference>
<accession>C1FN44</accession>
<name>HIS2_CLOBJ</name>
<reference key="1">
    <citation type="submission" date="2008-10" db="EMBL/GenBank/DDBJ databases">
        <title>Genome sequence of Clostridium botulinum A2 Kyoto.</title>
        <authorList>
            <person name="Shrivastava S."/>
            <person name="Brinkac L.M."/>
            <person name="Brown J.L."/>
            <person name="Bruce D."/>
            <person name="Detter C.C."/>
            <person name="Johnson E.A."/>
            <person name="Munk C.A."/>
            <person name="Smith L.A."/>
            <person name="Smith T.J."/>
            <person name="Sutton G."/>
            <person name="Brettin T.S."/>
        </authorList>
    </citation>
    <scope>NUCLEOTIDE SEQUENCE [LARGE SCALE GENOMIC DNA]</scope>
    <source>
        <strain>Kyoto / Type A2</strain>
    </source>
</reference>